<sequence>MNIIPRTSLIIYLKHMKHERQIRKYGHIVHSNRQRKYVVMYINEADADNIVHKLMQLKYVHDIQGSPYKYLKKTYEKEKHEIQ</sequence>
<proteinExistence type="inferred from homology"/>
<name>Y712_STAEQ</name>
<reference key="1">
    <citation type="journal article" date="2005" name="J. Bacteriol.">
        <title>Insights on evolution of virulence and resistance from the complete genome analysis of an early methicillin-resistant Staphylococcus aureus strain and a biofilm-producing methicillin-resistant Staphylococcus epidermidis strain.</title>
        <authorList>
            <person name="Gill S.R."/>
            <person name="Fouts D.E."/>
            <person name="Archer G.L."/>
            <person name="Mongodin E.F."/>
            <person name="DeBoy R.T."/>
            <person name="Ravel J."/>
            <person name="Paulsen I.T."/>
            <person name="Kolonay J.F."/>
            <person name="Brinkac L.M."/>
            <person name="Beanan M.J."/>
            <person name="Dodson R.J."/>
            <person name="Daugherty S.C."/>
            <person name="Madupu R."/>
            <person name="Angiuoli S.V."/>
            <person name="Durkin A.S."/>
            <person name="Haft D.H."/>
            <person name="Vamathevan J.J."/>
            <person name="Khouri H."/>
            <person name="Utterback T.R."/>
            <person name="Lee C."/>
            <person name="Dimitrov G."/>
            <person name="Jiang L."/>
            <person name="Qin H."/>
            <person name="Weidman J."/>
            <person name="Tran K."/>
            <person name="Kang K.H."/>
            <person name="Hance I.R."/>
            <person name="Nelson K.E."/>
            <person name="Fraser C.M."/>
        </authorList>
    </citation>
    <scope>NUCLEOTIDE SEQUENCE [LARGE SCALE GENOMIC DNA]</scope>
    <source>
        <strain>ATCC 35984 / DSM 28319 / BCRC 17069 / CCUG 31568 / BM 3577 / RP62A</strain>
    </source>
</reference>
<keyword id="KW-0963">Cytoplasm</keyword>
<keyword id="KW-1185">Reference proteome</keyword>
<accession>Q5HQ45</accession>
<comment type="subcellular location">
    <subcellularLocation>
        <location evidence="1">Cytoplasm</location>
    </subcellularLocation>
</comment>
<comment type="similarity">
    <text evidence="1">Belongs to the UPF0298 family.</text>
</comment>
<feature type="chain" id="PRO_0000074672" description="UPF0298 protein SERP0712">
    <location>
        <begin position="1"/>
        <end position="83"/>
    </location>
</feature>
<gene>
    <name type="ordered locus">SERP0712</name>
</gene>
<dbReference type="EMBL" id="CP000029">
    <property type="protein sequence ID" value="AAW54070.1"/>
    <property type="molecule type" value="Genomic_DNA"/>
</dbReference>
<dbReference type="RefSeq" id="WP_002439362.1">
    <property type="nucleotide sequence ID" value="NC_002976.3"/>
</dbReference>
<dbReference type="SMR" id="Q5HQ45"/>
<dbReference type="STRING" id="176279.SERP0712"/>
<dbReference type="KEGG" id="ser:SERP0712"/>
<dbReference type="eggNOG" id="COG4471">
    <property type="taxonomic scope" value="Bacteria"/>
</dbReference>
<dbReference type="HOGENOM" id="CLU_159890_2_1_9"/>
<dbReference type="Proteomes" id="UP000000531">
    <property type="component" value="Chromosome"/>
</dbReference>
<dbReference type="GO" id="GO:0005737">
    <property type="term" value="C:cytoplasm"/>
    <property type="evidence" value="ECO:0007669"/>
    <property type="project" value="UniProtKB-SubCell"/>
</dbReference>
<dbReference type="HAMAP" id="MF_01126">
    <property type="entry name" value="UPF0298"/>
    <property type="match status" value="1"/>
</dbReference>
<dbReference type="InterPro" id="IPR016979">
    <property type="entry name" value="DUF2129"/>
</dbReference>
<dbReference type="Pfam" id="PF09902">
    <property type="entry name" value="DUF2129"/>
    <property type="match status" value="1"/>
</dbReference>
<dbReference type="PIRSF" id="PIRSF031653">
    <property type="entry name" value="UCP031653"/>
    <property type="match status" value="1"/>
</dbReference>
<protein>
    <recommendedName>
        <fullName evidence="1">UPF0298 protein SERP0712</fullName>
    </recommendedName>
</protein>
<organism>
    <name type="scientific">Staphylococcus epidermidis (strain ATCC 35984 / DSM 28319 / BCRC 17069 / CCUG 31568 / BM 3577 / RP62A)</name>
    <dbReference type="NCBI Taxonomy" id="176279"/>
    <lineage>
        <taxon>Bacteria</taxon>
        <taxon>Bacillati</taxon>
        <taxon>Bacillota</taxon>
        <taxon>Bacilli</taxon>
        <taxon>Bacillales</taxon>
        <taxon>Staphylococcaceae</taxon>
        <taxon>Staphylococcus</taxon>
    </lineage>
</organism>
<evidence type="ECO:0000255" key="1">
    <source>
        <dbReference type="HAMAP-Rule" id="MF_01126"/>
    </source>
</evidence>